<organism>
    <name type="scientific">Zea mays</name>
    <name type="common">Maize</name>
    <dbReference type="NCBI Taxonomy" id="4577"/>
    <lineage>
        <taxon>Eukaryota</taxon>
        <taxon>Viridiplantae</taxon>
        <taxon>Streptophyta</taxon>
        <taxon>Embryophyta</taxon>
        <taxon>Tracheophyta</taxon>
        <taxon>Spermatophyta</taxon>
        <taxon>Magnoliopsida</taxon>
        <taxon>Liliopsida</taxon>
        <taxon>Poales</taxon>
        <taxon>Poaceae</taxon>
        <taxon>PACMAD clade</taxon>
        <taxon>Panicoideae</taxon>
        <taxon>Andropogonodae</taxon>
        <taxon>Andropogoneae</taxon>
        <taxon>Tripsacinae</taxon>
        <taxon>Zea</taxon>
    </lineage>
</organism>
<gene>
    <name type="primary">rps19-A</name>
</gene>
<gene>
    <name type="primary">rps19-B</name>
</gene>
<dbReference type="EMBL" id="Y00141">
    <property type="protein sequence ID" value="CAC35460.1"/>
    <property type="molecule type" value="Genomic_DNA"/>
</dbReference>
<dbReference type="EMBL" id="X86563">
    <property type="protein sequence ID" value="CAA60374.1"/>
    <property type="molecule type" value="Genomic_DNA"/>
</dbReference>
<dbReference type="EMBL" id="X86563">
    <property type="protein sequence ID" value="CAA60326.1"/>
    <property type="molecule type" value="Genomic_DNA"/>
</dbReference>
<dbReference type="PIR" id="S07388">
    <property type="entry name" value="R3ZM19"/>
</dbReference>
<dbReference type="SMR" id="P06588"/>
<dbReference type="FunCoup" id="P06588">
    <property type="interactions" value="25"/>
</dbReference>
<dbReference type="STRING" id="4577.P06588"/>
<dbReference type="PaxDb" id="4577-GRMZM2G427404_P01"/>
<dbReference type="KEGG" id="zma:845234"/>
<dbReference type="KEGG" id="zma:845235"/>
<dbReference type="MaizeGDB" id="66100"/>
<dbReference type="eggNOG" id="KOG0438">
    <property type="taxonomic scope" value="Eukaryota"/>
</dbReference>
<dbReference type="eggNOG" id="KOG0899">
    <property type="taxonomic scope" value="Eukaryota"/>
</dbReference>
<dbReference type="InParanoid" id="P06588"/>
<dbReference type="OrthoDB" id="584535at2759"/>
<dbReference type="Proteomes" id="UP000007305">
    <property type="component" value="Chloroplast"/>
</dbReference>
<dbReference type="GO" id="GO:0009507">
    <property type="term" value="C:chloroplast"/>
    <property type="evidence" value="ECO:0007669"/>
    <property type="project" value="UniProtKB-SubCell"/>
</dbReference>
<dbReference type="GO" id="GO:0005763">
    <property type="term" value="C:mitochondrial small ribosomal subunit"/>
    <property type="evidence" value="ECO:0000318"/>
    <property type="project" value="GO_Central"/>
</dbReference>
<dbReference type="GO" id="GO:0019843">
    <property type="term" value="F:rRNA binding"/>
    <property type="evidence" value="ECO:0007669"/>
    <property type="project" value="UniProtKB-UniRule"/>
</dbReference>
<dbReference type="GO" id="GO:0003735">
    <property type="term" value="F:structural constituent of ribosome"/>
    <property type="evidence" value="ECO:0000318"/>
    <property type="project" value="GO_Central"/>
</dbReference>
<dbReference type="GO" id="GO:0000028">
    <property type="term" value="P:ribosomal small subunit assembly"/>
    <property type="evidence" value="ECO:0000318"/>
    <property type="project" value="GO_Central"/>
</dbReference>
<dbReference type="GO" id="GO:0006412">
    <property type="term" value="P:translation"/>
    <property type="evidence" value="ECO:0007669"/>
    <property type="project" value="UniProtKB-UniRule"/>
</dbReference>
<dbReference type="FunFam" id="3.30.860.10:FF:000001">
    <property type="entry name" value="30S ribosomal protein S19"/>
    <property type="match status" value="1"/>
</dbReference>
<dbReference type="Gene3D" id="3.30.860.10">
    <property type="entry name" value="30s Ribosomal Protein S19, Chain A"/>
    <property type="match status" value="1"/>
</dbReference>
<dbReference type="HAMAP" id="MF_00531">
    <property type="entry name" value="Ribosomal_uS19"/>
    <property type="match status" value="1"/>
</dbReference>
<dbReference type="InterPro" id="IPR002222">
    <property type="entry name" value="Ribosomal_uS19"/>
</dbReference>
<dbReference type="InterPro" id="IPR005732">
    <property type="entry name" value="Ribosomal_uS19_bac-type"/>
</dbReference>
<dbReference type="InterPro" id="IPR020934">
    <property type="entry name" value="Ribosomal_uS19_CS"/>
</dbReference>
<dbReference type="InterPro" id="IPR023575">
    <property type="entry name" value="Ribosomal_uS19_SF"/>
</dbReference>
<dbReference type="NCBIfam" id="TIGR01050">
    <property type="entry name" value="rpsS_bact"/>
    <property type="match status" value="1"/>
</dbReference>
<dbReference type="PANTHER" id="PTHR11880">
    <property type="entry name" value="RIBOSOMAL PROTEIN S19P FAMILY MEMBER"/>
    <property type="match status" value="1"/>
</dbReference>
<dbReference type="PANTHER" id="PTHR11880:SF8">
    <property type="entry name" value="SMALL RIBOSOMAL SUBUNIT PROTEIN US19M"/>
    <property type="match status" value="1"/>
</dbReference>
<dbReference type="Pfam" id="PF00203">
    <property type="entry name" value="Ribosomal_S19"/>
    <property type="match status" value="1"/>
</dbReference>
<dbReference type="PIRSF" id="PIRSF002144">
    <property type="entry name" value="Ribosomal_S19"/>
    <property type="match status" value="1"/>
</dbReference>
<dbReference type="PRINTS" id="PR00975">
    <property type="entry name" value="RIBOSOMALS19"/>
</dbReference>
<dbReference type="SUPFAM" id="SSF54570">
    <property type="entry name" value="Ribosomal protein S19"/>
    <property type="match status" value="1"/>
</dbReference>
<dbReference type="PROSITE" id="PS00323">
    <property type="entry name" value="RIBOSOMAL_S19"/>
    <property type="match status" value="1"/>
</dbReference>
<evidence type="ECO:0000250" key="1"/>
<evidence type="ECO:0000305" key="2"/>
<feature type="initiator methionine" description="Removed" evidence="1">
    <location>
        <position position="1"/>
    </location>
</feature>
<feature type="chain" id="PRO_0000129968" description="Small ribosomal subunit protein uS19c">
    <location>
        <begin position="2"/>
        <end position="93"/>
    </location>
</feature>
<accession>P06588</accession>
<proteinExistence type="inferred from homology"/>
<geneLocation type="chloroplast"/>
<sequence>MTRKKTNPFVARHLLAKIEKVNMKEEKEIIVTWSRASSILPAMVGHTIAIHNGKEHIPIYITNPMVGRKLGEFVPTRHFTSYESTRKDTKSRR</sequence>
<comment type="function">
    <text evidence="1">Protein S19 forms a complex with S13 that binds strongly to the 16S ribosomal RNA.</text>
</comment>
<comment type="subcellular location">
    <subcellularLocation>
        <location>Plastid</location>
        <location>Chloroplast</location>
    </subcellularLocation>
</comment>
<comment type="similarity">
    <text evidence="2">Belongs to the universal ribosomal protein uS19 family.</text>
</comment>
<name>RR19_MAIZE</name>
<protein>
    <recommendedName>
        <fullName evidence="2">Small ribosomal subunit protein uS19c</fullName>
    </recommendedName>
    <alternativeName>
        <fullName>30S ribosomal protein S19, chloroplastic</fullName>
    </alternativeName>
</protein>
<reference key="1">
    <citation type="journal article" date="1987" name="Nucleic Acids Res.">
        <title>The sequence of the maize rps19 locus and of the inverted repeat/unique region junctions.</title>
        <authorList>
            <person name="McLaughlin W.E."/>
            <person name="Larrinua I.M."/>
        </authorList>
    </citation>
    <scope>NUCLEOTIDE SEQUENCE [GENOMIC DNA]</scope>
</reference>
<reference key="2">
    <citation type="journal article" date="1995" name="J. Mol. Biol.">
        <title>Complete sequence of the maize chloroplast genome: gene content, hotspots of divergence and fine tuning of genetic information by transcript editing.</title>
        <authorList>
            <person name="Maier R.M."/>
            <person name="Neckermann K."/>
            <person name="Igloi G.L."/>
            <person name="Koessel H."/>
        </authorList>
    </citation>
    <scope>NUCLEOTIDE SEQUENCE [LARGE SCALE GENOMIC DNA]</scope>
    <source>
        <strain>cv. B73</strain>
    </source>
</reference>
<keyword id="KW-0150">Chloroplast</keyword>
<keyword id="KW-0934">Plastid</keyword>
<keyword id="KW-1185">Reference proteome</keyword>
<keyword id="KW-0687">Ribonucleoprotein</keyword>
<keyword id="KW-0689">Ribosomal protein</keyword>
<keyword id="KW-0694">RNA-binding</keyword>
<keyword id="KW-0699">rRNA-binding</keyword>